<protein>
    <recommendedName>
        <fullName>Eukaryotic translation initiation factor 2 subunit 1</fullName>
    </recommendedName>
    <alternativeName>
        <fullName>Eukaryotic translation initiation factor 2 subunit alpha</fullName>
        <shortName>eIF-2-alpha</shortName>
        <shortName>eIF-2A</shortName>
        <shortName>eIF-2alpha</shortName>
    </alternativeName>
</protein>
<organism>
    <name type="scientific">Xenopus tropicalis</name>
    <name type="common">Western clawed frog</name>
    <name type="synonym">Silurana tropicalis</name>
    <dbReference type="NCBI Taxonomy" id="8364"/>
    <lineage>
        <taxon>Eukaryota</taxon>
        <taxon>Metazoa</taxon>
        <taxon>Chordata</taxon>
        <taxon>Craniata</taxon>
        <taxon>Vertebrata</taxon>
        <taxon>Euteleostomi</taxon>
        <taxon>Amphibia</taxon>
        <taxon>Batrachia</taxon>
        <taxon>Anura</taxon>
        <taxon>Pipoidea</taxon>
        <taxon>Pipidae</taxon>
        <taxon>Xenopodinae</taxon>
        <taxon>Xenopus</taxon>
        <taxon>Silurana</taxon>
    </lineage>
</organism>
<accession>Q6GL89</accession>
<reference key="1">
    <citation type="submission" date="2006-10" db="EMBL/GenBank/DDBJ databases">
        <authorList>
            <consortium name="Sanger Xenopus tropicalis EST/cDNA project"/>
        </authorList>
    </citation>
    <scope>NUCLEOTIDE SEQUENCE [LARGE SCALE MRNA]</scope>
    <source>
        <tissue>Gastrula</tissue>
    </source>
</reference>
<reference key="2">
    <citation type="submission" date="2004-06" db="EMBL/GenBank/DDBJ databases">
        <authorList>
            <consortium name="NIH - Xenopus Gene Collection (XGC) project"/>
        </authorList>
    </citation>
    <scope>NUCLEOTIDE SEQUENCE [LARGE SCALE MRNA]</scope>
    <source>
        <tissue>Embryo</tissue>
    </source>
</reference>
<feature type="initiator methionine" description="Removed" evidence="1">
    <location>
        <position position="1"/>
    </location>
</feature>
<feature type="chain" id="PRO_0000331512" description="Eukaryotic translation initiation factor 2 subunit 1">
    <location>
        <begin position="2"/>
        <end position="315"/>
    </location>
</feature>
<feature type="domain" description="S1 motif" evidence="6">
    <location>
        <begin position="17"/>
        <end position="88"/>
    </location>
</feature>
<feature type="region of interest" description="Disordered" evidence="7">
    <location>
        <begin position="292"/>
        <end position="315"/>
    </location>
</feature>
<feature type="compositionally biased region" description="Acidic residues" evidence="7">
    <location>
        <begin position="299"/>
        <end position="308"/>
    </location>
</feature>
<feature type="modified residue" description="Phosphoserine" evidence="4">
    <location>
        <position position="49"/>
    </location>
</feature>
<feature type="modified residue" description="Phosphoserine" evidence="5">
    <location>
        <position position="52"/>
    </location>
</feature>
<evidence type="ECO:0000250" key="1"/>
<evidence type="ECO:0000250" key="2">
    <source>
        <dbReference type="UniProtKB" id="P05198"/>
    </source>
</evidence>
<evidence type="ECO:0000250" key="3">
    <source>
        <dbReference type="UniProtKB" id="P56286"/>
    </source>
</evidence>
<evidence type="ECO:0000250" key="4">
    <source>
        <dbReference type="UniProtKB" id="P83268"/>
    </source>
</evidence>
<evidence type="ECO:0000250" key="5">
    <source>
        <dbReference type="UniProtKB" id="Q6ZWX6"/>
    </source>
</evidence>
<evidence type="ECO:0000255" key="6">
    <source>
        <dbReference type="PROSITE-ProRule" id="PRU00180"/>
    </source>
</evidence>
<evidence type="ECO:0000256" key="7">
    <source>
        <dbReference type="SAM" id="MobiDB-lite"/>
    </source>
</evidence>
<evidence type="ECO:0000305" key="8"/>
<name>IF2A_XENTR</name>
<proteinExistence type="evidence at transcript level"/>
<sequence length="315" mass="36126">MPALSCRFYQHKFPEVDDVVMVNVRSIAEMGAYVSLLEYNNIEGMILLSELSRRRIRSINKLIRIGRNECVVVIRVDKDKGYIDLSKRRVSPEEALKCEDKFTKSKTVYSILRHVAEVLEYTKDEQLESLYQRTAWVFDEKYKKPGYGAYDAFKHAVSDPDVLDGLDLNEDERRVLIDNINRRLTPQAVKIRADIEVACYGYEGIDAVKDALRAGLSCSTENMPIKINLIAPPRYVMTTTTLERTEGLSVLNQAMSVIKERIEEKRGVFNVQMEPKVVTDTDETELARQLERLEKENAEVDGDDDAEEMEAKTED</sequence>
<comment type="function">
    <text evidence="2">Functions in the early steps of protein synthesis by forming a ternary complex with GTP and initiator tRNA. This complex binds to a 40S ribosomal subunit, followed by mRNA binding to form a 43S pre-initiation complex. Junction of the 60S ribosomal subunit to form the 80S initiation complex is preceded by hydrolysis of the GTP bound to eIF-2 and release of an eIF-2-GDP binary complex. In order for eIF-2 to recycle and catalyze another round of initiation, the GDP bound to eIF-2 must exchange with GTP by way of a reaction catalyzed by eIF2B. EIF2S1/eIF2-alpha is a key component of the integrated stress response (ISR), required for adaptation to various stress: phosphorylation by metabolic-stress sensing protein kinases in response to stress converts EIF2S1/eIF-2-alpha in a global protein synthesis inhibitor, leading to a attenuation of cap-dependent translation, while concomitantly initiating the preferential translation of ISR-specific mRNAs, such as the transcriptional activators ATF4 and QRICH1.</text>
</comment>
<comment type="activity regulation">
    <text evidence="2">Activity is regulated by phosphorylation at Ser-49 and Ser-52, which stabilizes the eIF-2/GDP/eIF2B complex and prevents the eIF2B-mediated exchange of GDP for GTP, thereby preventing the formation of the 43S pre-initiation complex (PIC). This results in the global attenuation of 5' cap-dependent protein synthesis and concomitant translation of ISR-specific mRNAs that contain a short upstream open reading frame (uORF) in their 5' UTR.</text>
</comment>
<comment type="subunit">
    <text evidence="2">Eukaryotic translation initiation factor 2 eIF2 is a heterotrimeric complex composed of an alpha, a beta and a gamma subunit.</text>
</comment>
<comment type="subcellular location">
    <subcellularLocation>
        <location evidence="5">Cytoplasm</location>
        <location evidence="5">Stress granule</location>
    </subcellularLocation>
    <subcellularLocation>
        <location evidence="3">Cytoplasm</location>
        <location evidence="3">Cytosol</location>
    </subcellularLocation>
</comment>
<comment type="PTM">
    <text evidence="2">Phosphorylation at Ser-49 and Ser-52 stabilizes the eIF-2/GDP/eIF2B complex and prevents GDP/GTP exchange reaction, thus impairing the recycling of eIF-2 between successive rounds of initiation and leading to global inhibition of translation, while concomitantly initiating the preferential translation of integrated stress response (ISR)-specific mRNAs.</text>
</comment>
<comment type="similarity">
    <text evidence="8">Belongs to the eIF-2-alpha family.</text>
</comment>
<keyword id="KW-0963">Cytoplasm</keyword>
<keyword id="KW-0396">Initiation factor</keyword>
<keyword id="KW-0597">Phosphoprotein</keyword>
<keyword id="KW-0648">Protein biosynthesis</keyword>
<keyword id="KW-1185">Reference proteome</keyword>
<keyword id="KW-0694">RNA-binding</keyword>
<keyword id="KW-0810">Translation regulation</keyword>
<gene>
    <name type="primary">eif2s1</name>
    <name type="synonym">eif2a</name>
    <name type="ORF">TGas059e16.1</name>
</gene>
<dbReference type="EMBL" id="CR761726">
    <property type="protein sequence ID" value="CAJ83389.1"/>
    <property type="molecule type" value="mRNA"/>
</dbReference>
<dbReference type="EMBL" id="BC074615">
    <property type="protein sequence ID" value="AAH74615.1"/>
    <property type="molecule type" value="mRNA"/>
</dbReference>
<dbReference type="RefSeq" id="NP_001005630.1">
    <property type="nucleotide sequence ID" value="NM_001005630.1"/>
</dbReference>
<dbReference type="RefSeq" id="XP_031746173.1">
    <property type="nucleotide sequence ID" value="XM_031890313.1"/>
</dbReference>
<dbReference type="SMR" id="Q6GL89"/>
<dbReference type="FunCoup" id="Q6GL89">
    <property type="interactions" value="2775"/>
</dbReference>
<dbReference type="STRING" id="8364.ENSXETP00000011673"/>
<dbReference type="PaxDb" id="8364-ENSXETP00000061363"/>
<dbReference type="DNASU" id="448087"/>
<dbReference type="GeneID" id="448087"/>
<dbReference type="KEGG" id="xtr:448087"/>
<dbReference type="AGR" id="Xenbase:XB-GENE-989630"/>
<dbReference type="CTD" id="1965"/>
<dbReference type="Xenbase" id="XB-GENE-989630">
    <property type="gene designation" value="eif2s1"/>
</dbReference>
<dbReference type="eggNOG" id="KOG2916">
    <property type="taxonomic scope" value="Eukaryota"/>
</dbReference>
<dbReference type="InParanoid" id="Q6GL89"/>
<dbReference type="OMA" id="DVNEHQR"/>
<dbReference type="OrthoDB" id="1685042at2759"/>
<dbReference type="Reactome" id="R-XTR-156827">
    <property type="pathway name" value="L13a-mediated translational silencing of Ceruloplasmin expression"/>
</dbReference>
<dbReference type="Reactome" id="R-XTR-381042">
    <property type="pathway name" value="PERK regulates gene expression"/>
</dbReference>
<dbReference type="Reactome" id="R-XTR-72695">
    <property type="pathway name" value="Formation of the ternary complex, and subsequently, the 43S complex"/>
</dbReference>
<dbReference type="Reactome" id="R-XTR-72702">
    <property type="pathway name" value="Ribosomal scanning and start codon recognition"/>
</dbReference>
<dbReference type="Reactome" id="R-XTR-9840373">
    <property type="pathway name" value="Cellular response to mitochondrial stress"/>
</dbReference>
<dbReference type="Proteomes" id="UP000008143">
    <property type="component" value="Chromosome 8"/>
</dbReference>
<dbReference type="Bgee" id="ENSXETG00000011221">
    <property type="expression patterns" value="Expressed in neurula embryo and 19 other cell types or tissues"/>
</dbReference>
<dbReference type="GO" id="GO:0005737">
    <property type="term" value="C:cytoplasm"/>
    <property type="evidence" value="ECO:0000250"/>
    <property type="project" value="AgBase"/>
</dbReference>
<dbReference type="GO" id="GO:0010494">
    <property type="term" value="C:cytoplasmic stress granule"/>
    <property type="evidence" value="ECO:0007669"/>
    <property type="project" value="UniProtKB-SubCell"/>
</dbReference>
<dbReference type="GO" id="GO:0005829">
    <property type="term" value="C:cytosol"/>
    <property type="evidence" value="ECO:0007669"/>
    <property type="project" value="UniProtKB-SubCell"/>
</dbReference>
<dbReference type="GO" id="GO:0005850">
    <property type="term" value="C:eukaryotic translation initiation factor 2 complex"/>
    <property type="evidence" value="ECO:0000250"/>
    <property type="project" value="UniProtKB"/>
</dbReference>
<dbReference type="GO" id="GO:0003723">
    <property type="term" value="F:RNA binding"/>
    <property type="evidence" value="ECO:0007669"/>
    <property type="project" value="UniProtKB-KW"/>
</dbReference>
<dbReference type="GO" id="GO:0003743">
    <property type="term" value="F:translation initiation factor activity"/>
    <property type="evidence" value="ECO:0007669"/>
    <property type="project" value="UniProtKB-KW"/>
</dbReference>
<dbReference type="GO" id="GO:0034198">
    <property type="term" value="P:cellular response to amino acid starvation"/>
    <property type="evidence" value="ECO:0000250"/>
    <property type="project" value="UniProtKB"/>
</dbReference>
<dbReference type="GO" id="GO:0034644">
    <property type="term" value="P:cellular response to UV"/>
    <property type="evidence" value="ECO:0000250"/>
    <property type="project" value="UniProtKB"/>
</dbReference>
<dbReference type="GO" id="GO:0032057">
    <property type="term" value="P:negative regulation of translational initiation in response to stress"/>
    <property type="evidence" value="ECO:0000250"/>
    <property type="project" value="UniProtKB"/>
</dbReference>
<dbReference type="GO" id="GO:0036499">
    <property type="term" value="P:PERK-mediated unfolded protein response"/>
    <property type="evidence" value="ECO:0000250"/>
    <property type="project" value="UniProtKB"/>
</dbReference>
<dbReference type="GO" id="GO:0034976">
    <property type="term" value="P:response to endoplasmic reticulum stress"/>
    <property type="evidence" value="ECO:0000250"/>
    <property type="project" value="UniProtKB"/>
</dbReference>
<dbReference type="CDD" id="cd04452">
    <property type="entry name" value="S1_IF2_alpha"/>
    <property type="match status" value="1"/>
</dbReference>
<dbReference type="FunFam" id="1.10.150.190:FF:000001">
    <property type="entry name" value="Eukaryotic translation initiation factor 2 subunit 1"/>
    <property type="match status" value="1"/>
</dbReference>
<dbReference type="FunFam" id="2.40.50.140:FF:000795">
    <property type="entry name" value="Eukaryotic translation initiation factor 2 subunit 1"/>
    <property type="match status" value="1"/>
</dbReference>
<dbReference type="FunFam" id="3.30.70.1130:FF:000001">
    <property type="entry name" value="Eukaryotic translation initiation factor 2 subunit 1"/>
    <property type="match status" value="1"/>
</dbReference>
<dbReference type="Gene3D" id="3.30.70.1130">
    <property type="entry name" value="EIF_2_alpha"/>
    <property type="match status" value="1"/>
</dbReference>
<dbReference type="Gene3D" id="2.40.50.140">
    <property type="entry name" value="Nucleic acid-binding proteins"/>
    <property type="match status" value="1"/>
</dbReference>
<dbReference type="Gene3D" id="1.10.150.190">
    <property type="entry name" value="Translation initiation factor 2, subunit 1, domain 2"/>
    <property type="match status" value="1"/>
</dbReference>
<dbReference type="InterPro" id="IPR012340">
    <property type="entry name" value="NA-bd_OB-fold"/>
</dbReference>
<dbReference type="InterPro" id="IPR003029">
    <property type="entry name" value="S1_domain"/>
</dbReference>
<dbReference type="InterPro" id="IPR044126">
    <property type="entry name" value="S1_IF2_alpha"/>
</dbReference>
<dbReference type="InterPro" id="IPR024055">
    <property type="entry name" value="TIF2_asu_C"/>
</dbReference>
<dbReference type="InterPro" id="IPR024054">
    <property type="entry name" value="TIF2_asu_middle_sf"/>
</dbReference>
<dbReference type="InterPro" id="IPR011488">
    <property type="entry name" value="TIF_2_asu"/>
</dbReference>
<dbReference type="PANTHER" id="PTHR10602">
    <property type="entry name" value="EUKARYOTIC TRANSLATION INITIATION FACTOR 2 SUBUNIT 1"/>
    <property type="match status" value="1"/>
</dbReference>
<dbReference type="PANTHER" id="PTHR10602:SF8">
    <property type="entry name" value="EUKARYOTIC TRANSLATION INITIATION FACTOR 2 SUBUNIT 1"/>
    <property type="match status" value="1"/>
</dbReference>
<dbReference type="Pfam" id="PF07541">
    <property type="entry name" value="EIF_2_alpha"/>
    <property type="match status" value="1"/>
</dbReference>
<dbReference type="Pfam" id="PF00575">
    <property type="entry name" value="S1"/>
    <property type="match status" value="1"/>
</dbReference>
<dbReference type="SMART" id="SM00316">
    <property type="entry name" value="S1"/>
    <property type="match status" value="1"/>
</dbReference>
<dbReference type="SUPFAM" id="SSF110993">
    <property type="entry name" value="eIF-2-alpha, C-terminal domain"/>
    <property type="match status" value="1"/>
</dbReference>
<dbReference type="SUPFAM" id="SSF116742">
    <property type="entry name" value="eIF2alpha middle domain-like"/>
    <property type="match status" value="1"/>
</dbReference>
<dbReference type="SUPFAM" id="SSF50249">
    <property type="entry name" value="Nucleic acid-binding proteins"/>
    <property type="match status" value="1"/>
</dbReference>
<dbReference type="PROSITE" id="PS50126">
    <property type="entry name" value="S1"/>
    <property type="match status" value="1"/>
</dbReference>